<evidence type="ECO:0000255" key="1">
    <source>
        <dbReference type="HAMAP-Rule" id="MF_00753"/>
    </source>
</evidence>
<name>GLPB_SHIF8</name>
<protein>
    <recommendedName>
        <fullName evidence="1">Anaerobic glycerol-3-phosphate dehydrogenase subunit B</fullName>
        <shortName evidence="1">Anaerobic G-3-P dehydrogenase subunit B</shortName>
        <shortName evidence="1">Anaerobic G3Pdhase B</shortName>
        <ecNumber evidence="1">1.1.5.3</ecNumber>
    </recommendedName>
</protein>
<organism>
    <name type="scientific">Shigella flexneri serotype 5b (strain 8401)</name>
    <dbReference type="NCBI Taxonomy" id="373384"/>
    <lineage>
        <taxon>Bacteria</taxon>
        <taxon>Pseudomonadati</taxon>
        <taxon>Pseudomonadota</taxon>
        <taxon>Gammaproteobacteria</taxon>
        <taxon>Enterobacterales</taxon>
        <taxon>Enterobacteriaceae</taxon>
        <taxon>Shigella</taxon>
    </lineage>
</organism>
<reference key="1">
    <citation type="journal article" date="2006" name="BMC Genomics">
        <title>Complete genome sequence of Shigella flexneri 5b and comparison with Shigella flexneri 2a.</title>
        <authorList>
            <person name="Nie H."/>
            <person name="Yang F."/>
            <person name="Zhang X."/>
            <person name="Yang J."/>
            <person name="Chen L."/>
            <person name="Wang J."/>
            <person name="Xiong Z."/>
            <person name="Peng J."/>
            <person name="Sun L."/>
            <person name="Dong J."/>
            <person name="Xue Y."/>
            <person name="Xu X."/>
            <person name="Chen S."/>
            <person name="Yao Z."/>
            <person name="Shen Y."/>
            <person name="Jin Q."/>
        </authorList>
    </citation>
    <scope>NUCLEOTIDE SEQUENCE [LARGE SCALE GENOMIC DNA]</scope>
    <source>
        <strain>8401</strain>
    </source>
</reference>
<accession>Q0T2N9</accession>
<feature type="chain" id="PRO_1000046608" description="Anaerobic glycerol-3-phosphate dehydrogenase subunit B">
    <location>
        <begin position="1"/>
        <end position="419"/>
    </location>
</feature>
<sequence>MRFDTVIMGGGLAGLLCGLQLQKHGLRCAIVTRGQSALHFSSGSLDLLSHLPDGQPVADIHSGLESLRQQAPAHPYSLLGPQRVLDLACQAQALIAESGAQLQGSVELAHQRITPLGTLRATWLSSPEVPVWPLPAKKICVVGISGLMDFQAHLAAASLRELDLSVETAEIELPELDVLRNNATEFRAVNIARFLDNEENWPLLLDALIPVANTCEMILMPACFGLADDKLWRWLNEKLPCSLMLLPTLAPSVLGIRLQNQLQRQFVRQGGVWMPGDEVKKVTCKNGVVNEIWTRNHADIPLRPRFAVLASGSFFSGGLVAERNGIREPILGLDVLQTATRGEWYKGDFFAPQPWQQFGVTTDETLRPSQAGQTIENLFAIGSVLGGFDPIAQGCGGGVCAVSALHAAQQIAQRAGGQQ</sequence>
<gene>
    <name evidence="1" type="primary">glpB</name>
    <name type="ordered locus">SFV_2314</name>
</gene>
<proteinExistence type="inferred from homology"/>
<dbReference type="EC" id="1.1.5.3" evidence="1"/>
<dbReference type="EMBL" id="CP000266">
    <property type="protein sequence ID" value="ABF04426.1"/>
    <property type="molecule type" value="Genomic_DNA"/>
</dbReference>
<dbReference type="RefSeq" id="WP_001209896.1">
    <property type="nucleotide sequence ID" value="NC_008258.1"/>
</dbReference>
<dbReference type="KEGG" id="sfv:SFV_2314"/>
<dbReference type="HOGENOM" id="CLU_047793_0_0_6"/>
<dbReference type="UniPathway" id="UPA00618">
    <property type="reaction ID" value="UER00673"/>
</dbReference>
<dbReference type="Proteomes" id="UP000000659">
    <property type="component" value="Chromosome"/>
</dbReference>
<dbReference type="GO" id="GO:0009331">
    <property type="term" value="C:glycerol-3-phosphate dehydrogenase (FAD) complex"/>
    <property type="evidence" value="ECO:0007669"/>
    <property type="project" value="InterPro"/>
</dbReference>
<dbReference type="GO" id="GO:0004368">
    <property type="term" value="F:glycerol-3-phosphate dehydrogenase (quinone) activity"/>
    <property type="evidence" value="ECO:0007669"/>
    <property type="project" value="UniProtKB-UniRule"/>
</dbReference>
<dbReference type="GO" id="GO:0009061">
    <property type="term" value="P:anaerobic respiration"/>
    <property type="evidence" value="ECO:0007669"/>
    <property type="project" value="TreeGrafter"/>
</dbReference>
<dbReference type="GO" id="GO:0019563">
    <property type="term" value="P:glycerol catabolic process"/>
    <property type="evidence" value="ECO:0007669"/>
    <property type="project" value="UniProtKB-UniRule"/>
</dbReference>
<dbReference type="GO" id="GO:0046168">
    <property type="term" value="P:glycerol-3-phosphate catabolic process"/>
    <property type="evidence" value="ECO:0007669"/>
    <property type="project" value="TreeGrafter"/>
</dbReference>
<dbReference type="Gene3D" id="3.50.50.60">
    <property type="entry name" value="FAD/NAD(P)-binding domain"/>
    <property type="match status" value="1"/>
</dbReference>
<dbReference type="HAMAP" id="MF_00753">
    <property type="entry name" value="Glycerol3P_GlpB"/>
    <property type="match status" value="1"/>
</dbReference>
<dbReference type="InterPro" id="IPR003953">
    <property type="entry name" value="FAD-dep_OxRdtase_2_FAD-bd"/>
</dbReference>
<dbReference type="InterPro" id="IPR050315">
    <property type="entry name" value="FAD-oxidoreductase_2"/>
</dbReference>
<dbReference type="InterPro" id="IPR036188">
    <property type="entry name" value="FAD/NAD-bd_sf"/>
</dbReference>
<dbReference type="InterPro" id="IPR009158">
    <property type="entry name" value="G3P_DH_GlpB_su"/>
</dbReference>
<dbReference type="NCBIfam" id="TIGR03378">
    <property type="entry name" value="glycerol3P_GlpB"/>
    <property type="match status" value="1"/>
</dbReference>
<dbReference type="NCBIfam" id="NF003718">
    <property type="entry name" value="PRK05329.1-1"/>
    <property type="match status" value="1"/>
</dbReference>
<dbReference type="NCBIfam" id="NF003719">
    <property type="entry name" value="PRK05329.1-2"/>
    <property type="match status" value="1"/>
</dbReference>
<dbReference type="NCBIfam" id="NF003720">
    <property type="entry name" value="PRK05329.1-3"/>
    <property type="match status" value="1"/>
</dbReference>
<dbReference type="NCBIfam" id="NF003721">
    <property type="entry name" value="PRK05329.1-4"/>
    <property type="match status" value="1"/>
</dbReference>
<dbReference type="PANTHER" id="PTHR43400:SF11">
    <property type="entry name" value="ANAEROBIC GLYCEROL-3-PHOSPHATE DEHYDROGENASE SUBUNIT B"/>
    <property type="match status" value="1"/>
</dbReference>
<dbReference type="PANTHER" id="PTHR43400">
    <property type="entry name" value="FUMARATE REDUCTASE"/>
    <property type="match status" value="1"/>
</dbReference>
<dbReference type="Pfam" id="PF00890">
    <property type="entry name" value="FAD_binding_2"/>
    <property type="match status" value="1"/>
</dbReference>
<dbReference type="PIRSF" id="PIRSF000141">
    <property type="entry name" value="Anaerobic_G3P_dh"/>
    <property type="match status" value="1"/>
</dbReference>
<dbReference type="SUPFAM" id="SSF51905">
    <property type="entry name" value="FAD/NAD(P)-binding domain"/>
    <property type="match status" value="1"/>
</dbReference>
<comment type="function">
    <text evidence="1">Conversion of glycerol 3-phosphate to dihydroxyacetone. Uses fumarate or nitrate as electron acceptor.</text>
</comment>
<comment type="catalytic activity">
    <reaction evidence="1">
        <text>a quinone + sn-glycerol 3-phosphate = dihydroxyacetone phosphate + a quinol</text>
        <dbReference type="Rhea" id="RHEA:18977"/>
        <dbReference type="ChEBI" id="CHEBI:24646"/>
        <dbReference type="ChEBI" id="CHEBI:57597"/>
        <dbReference type="ChEBI" id="CHEBI:57642"/>
        <dbReference type="ChEBI" id="CHEBI:132124"/>
        <dbReference type="EC" id="1.1.5.3"/>
    </reaction>
</comment>
<comment type="cofactor">
    <cofactor evidence="1">
        <name>FMN</name>
        <dbReference type="ChEBI" id="CHEBI:58210"/>
    </cofactor>
</comment>
<comment type="pathway">
    <text evidence="1">Polyol metabolism; glycerol degradation via glycerol kinase pathway; glycerone phosphate from sn-glycerol 3-phosphate (anaerobic route): step 1/1.</text>
</comment>
<comment type="subunit">
    <text evidence="1">Composed of a catalytic GlpA/B dimer and of membrane bound GlpC.</text>
</comment>
<comment type="similarity">
    <text evidence="1">Belongs to the anaerobic G-3-P dehydrogenase subunit B family.</text>
</comment>
<keyword id="KW-0285">Flavoprotein</keyword>
<keyword id="KW-0288">FMN</keyword>
<keyword id="KW-0560">Oxidoreductase</keyword>